<gene>
    <name evidence="1" type="primary">adk</name>
    <name type="ordered locus">Rmet_0532</name>
</gene>
<reference key="1">
    <citation type="journal article" date="2010" name="PLoS ONE">
        <title>The complete genome sequence of Cupriavidus metallidurans strain CH34, a master survivalist in harsh and anthropogenic environments.</title>
        <authorList>
            <person name="Janssen P.J."/>
            <person name="Van Houdt R."/>
            <person name="Moors H."/>
            <person name="Monsieurs P."/>
            <person name="Morin N."/>
            <person name="Michaux A."/>
            <person name="Benotmane M.A."/>
            <person name="Leys N."/>
            <person name="Vallaeys T."/>
            <person name="Lapidus A."/>
            <person name="Monchy S."/>
            <person name="Medigue C."/>
            <person name="Taghavi S."/>
            <person name="McCorkle S."/>
            <person name="Dunn J."/>
            <person name="van der Lelie D."/>
            <person name="Mergeay M."/>
        </authorList>
    </citation>
    <scope>NUCLEOTIDE SEQUENCE [LARGE SCALE GENOMIC DNA]</scope>
    <source>
        <strain>ATCC 43123 / DSM 2839 / NBRC 102507 / CH34</strain>
    </source>
</reference>
<protein>
    <recommendedName>
        <fullName evidence="1">Adenylate kinase</fullName>
        <shortName evidence="1">AK</shortName>
        <ecNumber evidence="1">2.7.4.3</ecNumber>
    </recommendedName>
    <alternativeName>
        <fullName evidence="1">ATP-AMP transphosphorylase</fullName>
    </alternativeName>
    <alternativeName>
        <fullName evidence="1">ATP:AMP phosphotransferase</fullName>
    </alternativeName>
    <alternativeName>
        <fullName evidence="1">Adenylate monophosphate kinase</fullName>
    </alternativeName>
</protein>
<organism>
    <name type="scientific">Cupriavidus metallidurans (strain ATCC 43123 / DSM 2839 / NBRC 102507 / CH34)</name>
    <name type="common">Ralstonia metallidurans</name>
    <dbReference type="NCBI Taxonomy" id="266264"/>
    <lineage>
        <taxon>Bacteria</taxon>
        <taxon>Pseudomonadati</taxon>
        <taxon>Pseudomonadota</taxon>
        <taxon>Betaproteobacteria</taxon>
        <taxon>Burkholderiales</taxon>
        <taxon>Burkholderiaceae</taxon>
        <taxon>Cupriavidus</taxon>
    </lineage>
</organism>
<accession>Q1LR08</accession>
<sequence length="221" mass="24144">MRLILLGAPGAGKGTQAKFICEKFGIPQISTGDMLRAAVKAGTPLGIEAKKVMDAGGLVSDDIIIGLVKDRLKQPDCEKGYLFDGFPRTIPQAEAMKEAGVAIDYVLEIDVPFDAIIERMSGRRVHVASGRTYHVKFNPPKADMVDDETGEALIQRDDDKEETVRKRLDVYSQQTRPLVDYYSNWAANGDASAKVSPPKYRKIAGLGEVDKITASVFDALK</sequence>
<proteinExistence type="inferred from homology"/>
<name>KAD_CUPMC</name>
<evidence type="ECO:0000255" key="1">
    <source>
        <dbReference type="HAMAP-Rule" id="MF_00235"/>
    </source>
</evidence>
<dbReference type="EC" id="2.7.4.3" evidence="1"/>
<dbReference type="EMBL" id="CP000352">
    <property type="protein sequence ID" value="ABF07418.1"/>
    <property type="molecule type" value="Genomic_DNA"/>
</dbReference>
<dbReference type="RefSeq" id="WP_011515394.1">
    <property type="nucleotide sequence ID" value="NC_007973.1"/>
</dbReference>
<dbReference type="SMR" id="Q1LR08"/>
<dbReference type="STRING" id="266264.Rmet_0532"/>
<dbReference type="KEGG" id="rme:Rmet_0532"/>
<dbReference type="eggNOG" id="COG0563">
    <property type="taxonomic scope" value="Bacteria"/>
</dbReference>
<dbReference type="HOGENOM" id="CLU_032354_1_2_4"/>
<dbReference type="UniPathway" id="UPA00588">
    <property type="reaction ID" value="UER00649"/>
</dbReference>
<dbReference type="Proteomes" id="UP000002429">
    <property type="component" value="Chromosome"/>
</dbReference>
<dbReference type="GO" id="GO:0005737">
    <property type="term" value="C:cytoplasm"/>
    <property type="evidence" value="ECO:0007669"/>
    <property type="project" value="UniProtKB-SubCell"/>
</dbReference>
<dbReference type="GO" id="GO:0004017">
    <property type="term" value="F:adenylate kinase activity"/>
    <property type="evidence" value="ECO:0007669"/>
    <property type="project" value="UniProtKB-UniRule"/>
</dbReference>
<dbReference type="GO" id="GO:0005524">
    <property type="term" value="F:ATP binding"/>
    <property type="evidence" value="ECO:0007669"/>
    <property type="project" value="UniProtKB-UniRule"/>
</dbReference>
<dbReference type="GO" id="GO:0044209">
    <property type="term" value="P:AMP salvage"/>
    <property type="evidence" value="ECO:0007669"/>
    <property type="project" value="UniProtKB-UniRule"/>
</dbReference>
<dbReference type="CDD" id="cd01428">
    <property type="entry name" value="ADK"/>
    <property type="match status" value="1"/>
</dbReference>
<dbReference type="FunFam" id="3.40.50.300:FF:000106">
    <property type="entry name" value="Adenylate kinase mitochondrial"/>
    <property type="match status" value="1"/>
</dbReference>
<dbReference type="Gene3D" id="3.40.50.300">
    <property type="entry name" value="P-loop containing nucleotide triphosphate hydrolases"/>
    <property type="match status" value="1"/>
</dbReference>
<dbReference type="HAMAP" id="MF_00235">
    <property type="entry name" value="Adenylate_kinase_Adk"/>
    <property type="match status" value="1"/>
</dbReference>
<dbReference type="InterPro" id="IPR006259">
    <property type="entry name" value="Adenyl_kin_sub"/>
</dbReference>
<dbReference type="InterPro" id="IPR000850">
    <property type="entry name" value="Adenylat/UMP-CMP_kin"/>
</dbReference>
<dbReference type="InterPro" id="IPR033690">
    <property type="entry name" value="Adenylat_kinase_CS"/>
</dbReference>
<dbReference type="InterPro" id="IPR007862">
    <property type="entry name" value="Adenylate_kinase_lid-dom"/>
</dbReference>
<dbReference type="InterPro" id="IPR027417">
    <property type="entry name" value="P-loop_NTPase"/>
</dbReference>
<dbReference type="NCBIfam" id="TIGR01351">
    <property type="entry name" value="adk"/>
    <property type="match status" value="1"/>
</dbReference>
<dbReference type="NCBIfam" id="NF001379">
    <property type="entry name" value="PRK00279.1-1"/>
    <property type="match status" value="1"/>
</dbReference>
<dbReference type="NCBIfam" id="NF001380">
    <property type="entry name" value="PRK00279.1-2"/>
    <property type="match status" value="1"/>
</dbReference>
<dbReference type="NCBIfam" id="NF001381">
    <property type="entry name" value="PRK00279.1-3"/>
    <property type="match status" value="1"/>
</dbReference>
<dbReference type="NCBIfam" id="NF011100">
    <property type="entry name" value="PRK14527.1"/>
    <property type="match status" value="1"/>
</dbReference>
<dbReference type="PANTHER" id="PTHR23359">
    <property type="entry name" value="NUCLEOTIDE KINASE"/>
    <property type="match status" value="1"/>
</dbReference>
<dbReference type="Pfam" id="PF00406">
    <property type="entry name" value="ADK"/>
    <property type="match status" value="1"/>
</dbReference>
<dbReference type="Pfam" id="PF05191">
    <property type="entry name" value="ADK_lid"/>
    <property type="match status" value="1"/>
</dbReference>
<dbReference type="PRINTS" id="PR00094">
    <property type="entry name" value="ADENYLTKNASE"/>
</dbReference>
<dbReference type="SUPFAM" id="SSF52540">
    <property type="entry name" value="P-loop containing nucleoside triphosphate hydrolases"/>
    <property type="match status" value="1"/>
</dbReference>
<dbReference type="PROSITE" id="PS00113">
    <property type="entry name" value="ADENYLATE_KINASE"/>
    <property type="match status" value="1"/>
</dbReference>
<keyword id="KW-0067">ATP-binding</keyword>
<keyword id="KW-0963">Cytoplasm</keyword>
<keyword id="KW-0418">Kinase</keyword>
<keyword id="KW-0545">Nucleotide biosynthesis</keyword>
<keyword id="KW-0547">Nucleotide-binding</keyword>
<keyword id="KW-1185">Reference proteome</keyword>
<keyword id="KW-0808">Transferase</keyword>
<feature type="chain" id="PRO_1000021763" description="Adenylate kinase">
    <location>
        <begin position="1"/>
        <end position="221"/>
    </location>
</feature>
<feature type="region of interest" description="NMP" evidence="1">
    <location>
        <begin position="30"/>
        <end position="59"/>
    </location>
</feature>
<feature type="region of interest" description="LID" evidence="1">
    <location>
        <begin position="122"/>
        <end position="159"/>
    </location>
</feature>
<feature type="binding site" evidence="1">
    <location>
        <begin position="10"/>
        <end position="15"/>
    </location>
    <ligand>
        <name>ATP</name>
        <dbReference type="ChEBI" id="CHEBI:30616"/>
    </ligand>
</feature>
<feature type="binding site" evidence="1">
    <location>
        <position position="31"/>
    </location>
    <ligand>
        <name>AMP</name>
        <dbReference type="ChEBI" id="CHEBI:456215"/>
    </ligand>
</feature>
<feature type="binding site" evidence="1">
    <location>
        <position position="36"/>
    </location>
    <ligand>
        <name>AMP</name>
        <dbReference type="ChEBI" id="CHEBI:456215"/>
    </ligand>
</feature>
<feature type="binding site" evidence="1">
    <location>
        <begin position="57"/>
        <end position="59"/>
    </location>
    <ligand>
        <name>AMP</name>
        <dbReference type="ChEBI" id="CHEBI:456215"/>
    </ligand>
</feature>
<feature type="binding site" evidence="1">
    <location>
        <begin position="85"/>
        <end position="88"/>
    </location>
    <ligand>
        <name>AMP</name>
        <dbReference type="ChEBI" id="CHEBI:456215"/>
    </ligand>
</feature>
<feature type="binding site" evidence="1">
    <location>
        <position position="92"/>
    </location>
    <ligand>
        <name>AMP</name>
        <dbReference type="ChEBI" id="CHEBI:456215"/>
    </ligand>
</feature>
<feature type="binding site" evidence="1">
    <location>
        <position position="123"/>
    </location>
    <ligand>
        <name>ATP</name>
        <dbReference type="ChEBI" id="CHEBI:30616"/>
    </ligand>
</feature>
<feature type="binding site" evidence="1">
    <location>
        <begin position="132"/>
        <end position="133"/>
    </location>
    <ligand>
        <name>ATP</name>
        <dbReference type="ChEBI" id="CHEBI:30616"/>
    </ligand>
</feature>
<feature type="binding site" evidence="1">
    <location>
        <position position="156"/>
    </location>
    <ligand>
        <name>AMP</name>
        <dbReference type="ChEBI" id="CHEBI:456215"/>
    </ligand>
</feature>
<feature type="binding site" evidence="1">
    <location>
        <position position="167"/>
    </location>
    <ligand>
        <name>AMP</name>
        <dbReference type="ChEBI" id="CHEBI:456215"/>
    </ligand>
</feature>
<feature type="binding site" evidence="1">
    <location>
        <position position="207"/>
    </location>
    <ligand>
        <name>ATP</name>
        <dbReference type="ChEBI" id="CHEBI:30616"/>
    </ligand>
</feature>
<comment type="function">
    <text evidence="1">Catalyzes the reversible transfer of the terminal phosphate group between ATP and AMP. Plays an important role in cellular energy homeostasis and in adenine nucleotide metabolism.</text>
</comment>
<comment type="catalytic activity">
    <reaction evidence="1">
        <text>AMP + ATP = 2 ADP</text>
        <dbReference type="Rhea" id="RHEA:12973"/>
        <dbReference type="ChEBI" id="CHEBI:30616"/>
        <dbReference type="ChEBI" id="CHEBI:456215"/>
        <dbReference type="ChEBI" id="CHEBI:456216"/>
        <dbReference type="EC" id="2.7.4.3"/>
    </reaction>
</comment>
<comment type="pathway">
    <text evidence="1">Purine metabolism; AMP biosynthesis via salvage pathway; AMP from ADP: step 1/1.</text>
</comment>
<comment type="subunit">
    <text evidence="1">Monomer.</text>
</comment>
<comment type="subcellular location">
    <subcellularLocation>
        <location evidence="1">Cytoplasm</location>
    </subcellularLocation>
</comment>
<comment type="domain">
    <text evidence="1">Consists of three domains, a large central CORE domain and two small peripheral domains, NMPbind and LID, which undergo movements during catalysis. The LID domain closes over the site of phosphoryl transfer upon ATP binding. Assembling and dissambling the active center during each catalytic cycle provides an effective means to prevent ATP hydrolysis.</text>
</comment>
<comment type="similarity">
    <text evidence="1">Belongs to the adenylate kinase family.</text>
</comment>